<evidence type="ECO:0000250" key="1">
    <source>
        <dbReference type="UniProtKB" id="P38244"/>
    </source>
</evidence>
<evidence type="ECO:0000250" key="2">
    <source>
        <dbReference type="UniProtKB" id="P80561"/>
    </source>
</evidence>
<evidence type="ECO:0000255" key="3"/>
<evidence type="ECO:0000255" key="4">
    <source>
        <dbReference type="PROSITE-ProRule" id="PRU00498"/>
    </source>
</evidence>
<evidence type="ECO:0000256" key="5">
    <source>
        <dbReference type="SAM" id="MobiDB-lite"/>
    </source>
</evidence>
<evidence type="ECO:0000305" key="6"/>
<organism>
    <name type="scientific">Paracoccidioides brasiliensis (strain Pb03)</name>
    <dbReference type="NCBI Taxonomy" id="482561"/>
    <lineage>
        <taxon>Eukaryota</taxon>
        <taxon>Fungi</taxon>
        <taxon>Dikarya</taxon>
        <taxon>Ascomycota</taxon>
        <taxon>Pezizomycotina</taxon>
        <taxon>Eurotiomycetes</taxon>
        <taxon>Eurotiomycetidae</taxon>
        <taxon>Onygenales</taxon>
        <taxon>Ajellomycetaceae</taxon>
        <taxon>Paracoccidioides</taxon>
    </lineage>
</organism>
<accession>C0S345</accession>
<sequence>MSPAMANPRVRKFNPIAFTPLPVTFITTIVYLAVLILVLVTYLVVPPAPTLEMSPKGVNLTEAWRDLQHLTEGFHPYNSRRNDDVHAWLLHRIEAIVRESASADGGPEVFVFDDNLSNLTYSNGGVSKSPIVGVYFESTNIIVYIRGSEDDPQNWWEWSNGKPKGKGGVLVNAHYDSVSTGYGATDDGMGVVSLLQLLRYFTTAGNKPRKGLVLLFNNGEEDYLNGARVYSQHAMSNFTHTFLNLEGAGAGGRACLFRSTDTEVTRFYKNAKHPFGSVLAGDGFKLGLIRSQTDYVVFNGVLGLRGLDVSFIAPRSRYHTDQDDARHTNVDSLWHMLSVAIGTTEGLVSYTGTDFDSKTTDQDKVNSGDGTLGIWFDIFGSAFAVFRLHTLFALSVTLLVIGPLVLFITSIALSKTDRMYLFSMSKSLGGASETVSLRGLRGLFRTPIILTVTTVIPIGLAYLLEKINPYIVHSSQFAVWSMMLSVWIFVAWFLARVADFFRPSALHRAYSYTWIFIVTWIMLVISTVYANQKGIAAGYFTFFYFAAVFLATWVSYLELFSLPRKGYYARQASRRQKRRSSSLSSRLLTPSADELPSDIGPNGAENVGDPDETDPTESTSLLRGQRTTFANYRTGGDDWVTEYTAEDEHVREASIFGHEQSWSWTLPRWTWILQLLLLAPIVIILVGQVGLLLTTAMSQIGSDGVSTFIVYLACALFSTLLFAPLLPFIHRFTYHVPTFLLLIFIGTLIYNLVAFPFSPANRLKIFFIQEVNLDDGTNKVSLTGIQPYLTDTINAIPSAAGQTANCTQGPFGSLVRCSWSGLPPRVVKEDPGNDQTMGPYTWISYNITRTVGKNEARIKVSGRNTRACKLKFDNPVADYRISGSAVDHRLPHTSRQGVAEIRLWSRTWENTWVVDVDWHSNPVNPGESKDGDEKQDVSKNELSGKVICLWSDNNESGVIPALDEVRLYAPAWVAISKSADGLVEASHDFIIQ</sequence>
<comment type="function">
    <text evidence="1">May be involved in vacuolar sorting and osmoregulation.</text>
</comment>
<comment type="cofactor">
    <cofactor evidence="2">
        <name>Zn(2+)</name>
        <dbReference type="ChEBI" id="CHEBI:29105"/>
    </cofactor>
    <text evidence="2">Binds 2 Zn(2+) ions per subunit.</text>
</comment>
<comment type="subcellular location">
    <subcellularLocation>
        <location evidence="1">Vacuole membrane</location>
        <topology evidence="3">Multi-pass membrane protein</topology>
    </subcellularLocation>
</comment>
<comment type="similarity">
    <text evidence="6">Belongs to the peptidase M28 family.</text>
</comment>
<protein>
    <recommendedName>
        <fullName evidence="1">Vacuolar membrane protease</fullName>
        <ecNumber evidence="6">3.4.-.-</ecNumber>
    </recommendedName>
    <alternativeName>
        <fullName evidence="1">FXNA-related family protease 1</fullName>
    </alternativeName>
</protein>
<proteinExistence type="inferred from homology"/>
<gene>
    <name type="ORF">PABG_02109</name>
</gene>
<name>PFF1_PARBP</name>
<dbReference type="EC" id="3.4.-.-" evidence="6"/>
<dbReference type="EMBL" id="KN305533">
    <property type="protein sequence ID" value="EEH19850.1"/>
    <property type="molecule type" value="Genomic_DNA"/>
</dbReference>
<dbReference type="SMR" id="C0S345"/>
<dbReference type="VEuPathDB" id="FungiDB:PABG_02109"/>
<dbReference type="HOGENOM" id="CLU_006412_1_0_1"/>
<dbReference type="OrthoDB" id="30877at33183"/>
<dbReference type="GO" id="GO:0005774">
    <property type="term" value="C:vacuolar membrane"/>
    <property type="evidence" value="ECO:0007669"/>
    <property type="project" value="UniProtKB-SubCell"/>
</dbReference>
<dbReference type="GO" id="GO:0046872">
    <property type="term" value="F:metal ion binding"/>
    <property type="evidence" value="ECO:0007669"/>
    <property type="project" value="UniProtKB-KW"/>
</dbReference>
<dbReference type="GO" id="GO:0008235">
    <property type="term" value="F:metalloexopeptidase activity"/>
    <property type="evidence" value="ECO:0007669"/>
    <property type="project" value="InterPro"/>
</dbReference>
<dbReference type="GO" id="GO:0006508">
    <property type="term" value="P:proteolysis"/>
    <property type="evidence" value="ECO:0007669"/>
    <property type="project" value="UniProtKB-KW"/>
</dbReference>
<dbReference type="CDD" id="cd03875">
    <property type="entry name" value="M28_Fxna_like"/>
    <property type="match status" value="1"/>
</dbReference>
<dbReference type="FunFam" id="3.40.630.10:FF:000057">
    <property type="entry name" value="Vacuolar membrane protease"/>
    <property type="match status" value="1"/>
</dbReference>
<dbReference type="Gene3D" id="3.40.630.10">
    <property type="entry name" value="Zn peptidases"/>
    <property type="match status" value="1"/>
</dbReference>
<dbReference type="InterPro" id="IPR048024">
    <property type="entry name" value="Fxna-like_M28_dom"/>
</dbReference>
<dbReference type="InterPro" id="IPR045175">
    <property type="entry name" value="M28_fam"/>
</dbReference>
<dbReference type="InterPro" id="IPR007484">
    <property type="entry name" value="Peptidase_M28"/>
</dbReference>
<dbReference type="InterPro" id="IPR053975">
    <property type="entry name" value="PFF1_C"/>
</dbReference>
<dbReference type="InterPro" id="IPR053976">
    <property type="entry name" value="PFF1_TM"/>
</dbReference>
<dbReference type="PANTHER" id="PTHR12147">
    <property type="entry name" value="METALLOPEPTIDASE M28 FAMILY MEMBER"/>
    <property type="match status" value="1"/>
</dbReference>
<dbReference type="PANTHER" id="PTHR12147:SF58">
    <property type="entry name" value="VACUOLAR MEMBRANE PROTEASE"/>
    <property type="match status" value="1"/>
</dbReference>
<dbReference type="Pfam" id="PF04389">
    <property type="entry name" value="Peptidase_M28"/>
    <property type="match status" value="1"/>
</dbReference>
<dbReference type="Pfam" id="PF22250">
    <property type="entry name" value="PFF1_C"/>
    <property type="match status" value="1"/>
</dbReference>
<dbReference type="Pfam" id="PF22251">
    <property type="entry name" value="PFF1_TM"/>
    <property type="match status" value="1"/>
</dbReference>
<dbReference type="SUPFAM" id="SSF53187">
    <property type="entry name" value="Zn-dependent exopeptidases"/>
    <property type="match status" value="1"/>
</dbReference>
<keyword id="KW-0325">Glycoprotein</keyword>
<keyword id="KW-0378">Hydrolase</keyword>
<keyword id="KW-0472">Membrane</keyword>
<keyword id="KW-0479">Metal-binding</keyword>
<keyword id="KW-0482">Metalloprotease</keyword>
<keyword id="KW-0645">Protease</keyword>
<keyword id="KW-0812">Transmembrane</keyword>
<keyword id="KW-1133">Transmembrane helix</keyword>
<keyword id="KW-0926">Vacuole</keyword>
<keyword id="KW-0862">Zinc</keyword>
<reference key="1">
    <citation type="journal article" date="2011" name="PLoS Genet.">
        <title>Comparative genomic analysis of human fungal pathogens causing paracoccidioidomycosis.</title>
        <authorList>
            <person name="Desjardins C.A."/>
            <person name="Champion M.D."/>
            <person name="Holder J.W."/>
            <person name="Muszewska A."/>
            <person name="Goldberg J."/>
            <person name="Bailao A.M."/>
            <person name="Brigido M.M."/>
            <person name="Ferreira M.E."/>
            <person name="Garcia A.M."/>
            <person name="Grynberg M."/>
            <person name="Gujja S."/>
            <person name="Heiman D.I."/>
            <person name="Henn M.R."/>
            <person name="Kodira C.D."/>
            <person name="Leon-Narvaez H."/>
            <person name="Longo L.V.G."/>
            <person name="Ma L.-J."/>
            <person name="Malavazi I."/>
            <person name="Matsuo A.L."/>
            <person name="Morais F.V."/>
            <person name="Pereira M."/>
            <person name="Rodriguez-Brito S."/>
            <person name="Sakthikumar S."/>
            <person name="Salem-Izacc S.M."/>
            <person name="Sykes S.M."/>
            <person name="Teixeira M.M."/>
            <person name="Vallejo M.C."/>
            <person name="Walter M.E."/>
            <person name="Yandava C."/>
            <person name="Young S."/>
            <person name="Zeng Q."/>
            <person name="Zucker J."/>
            <person name="Felipe M.S."/>
            <person name="Goldman G.H."/>
            <person name="Haas B.J."/>
            <person name="McEwen J.G."/>
            <person name="Nino-Vega G."/>
            <person name="Puccia R."/>
            <person name="San-Blas G."/>
            <person name="Soares C.M."/>
            <person name="Birren B.W."/>
            <person name="Cuomo C.A."/>
        </authorList>
    </citation>
    <scope>NUCLEOTIDE SEQUENCE [LARGE SCALE GENOMIC DNA]</scope>
    <source>
        <strain>Pb03</strain>
    </source>
</reference>
<feature type="chain" id="PRO_0000411730" description="Vacuolar membrane protease">
    <location>
        <begin position="1"/>
        <end position="992"/>
    </location>
</feature>
<feature type="topological domain" description="Cytoplasmic" evidence="1">
    <location>
        <begin position="1"/>
        <end position="24"/>
    </location>
</feature>
<feature type="transmembrane region" description="Helical; Name=1" evidence="3">
    <location>
        <begin position="25"/>
        <end position="45"/>
    </location>
</feature>
<feature type="topological domain" description="Vacuolar" evidence="1">
    <location>
        <begin position="46"/>
        <end position="390"/>
    </location>
</feature>
<feature type="transmembrane region" description="Helical; Name=2" evidence="3">
    <location>
        <begin position="391"/>
        <end position="411"/>
    </location>
</feature>
<feature type="topological domain" description="Cytoplasmic" evidence="1">
    <location>
        <begin position="412"/>
        <end position="446"/>
    </location>
</feature>
<feature type="transmembrane region" description="Helical; Name=3" evidence="3">
    <location>
        <begin position="447"/>
        <end position="467"/>
    </location>
</feature>
<feature type="topological domain" description="Vacuolar" evidence="1">
    <location>
        <begin position="468"/>
        <end position="474"/>
    </location>
</feature>
<feature type="transmembrane region" description="Helical; Name=4" evidence="3">
    <location>
        <begin position="475"/>
        <end position="495"/>
    </location>
</feature>
<feature type="topological domain" description="Cytoplasmic" evidence="1">
    <location>
        <begin position="496"/>
        <end position="508"/>
    </location>
</feature>
<feature type="transmembrane region" description="Helical; Name=5" evidence="3">
    <location>
        <begin position="509"/>
        <end position="529"/>
    </location>
</feature>
<feature type="topological domain" description="Vacuolar" evidence="1">
    <location>
        <begin position="530"/>
        <end position="533"/>
    </location>
</feature>
<feature type="transmembrane region" description="Helical; Name=6" evidence="3">
    <location>
        <begin position="534"/>
        <end position="554"/>
    </location>
</feature>
<feature type="topological domain" description="Cytoplasmic" evidence="1">
    <location>
        <begin position="555"/>
        <end position="671"/>
    </location>
</feature>
<feature type="transmembrane region" description="Helical; Name=7" evidence="3">
    <location>
        <begin position="672"/>
        <end position="692"/>
    </location>
</feature>
<feature type="topological domain" description="Vacuolar" evidence="1">
    <location>
        <begin position="693"/>
        <end position="708"/>
    </location>
</feature>
<feature type="transmembrane region" description="Helical; Name=8" evidence="3">
    <location>
        <begin position="709"/>
        <end position="729"/>
    </location>
</feature>
<feature type="topological domain" description="Cytoplasmic" evidence="1">
    <location>
        <begin position="730"/>
        <end position="736"/>
    </location>
</feature>
<feature type="transmembrane region" description="Helical; Name=9" evidence="3">
    <location>
        <begin position="737"/>
        <end position="757"/>
    </location>
</feature>
<feature type="topological domain" description="Vacuolar" evidence="1">
    <location>
        <begin position="758"/>
        <end position="992"/>
    </location>
</feature>
<feature type="region of interest" description="Disordered" evidence="5">
    <location>
        <begin position="579"/>
        <end position="620"/>
    </location>
</feature>
<feature type="active site" description="Proton acceptor" evidence="2">
    <location>
        <position position="220"/>
    </location>
</feature>
<feature type="binding site" evidence="2">
    <location>
        <position position="174"/>
    </location>
    <ligand>
        <name>Zn(2+)</name>
        <dbReference type="ChEBI" id="CHEBI:29105"/>
        <label>1</label>
        <note>catalytic</note>
    </ligand>
</feature>
<feature type="binding site" evidence="2">
    <location>
        <position position="186"/>
    </location>
    <ligand>
        <name>Zn(2+)</name>
        <dbReference type="ChEBI" id="CHEBI:29105"/>
        <label>1</label>
        <note>catalytic</note>
    </ligand>
</feature>
<feature type="binding site" evidence="2">
    <location>
        <position position="186"/>
    </location>
    <ligand>
        <name>Zn(2+)</name>
        <dbReference type="ChEBI" id="CHEBI:29105"/>
        <label>2</label>
        <note>catalytic</note>
    </ligand>
</feature>
<feature type="binding site" evidence="2">
    <location>
        <position position="221"/>
    </location>
    <ligand>
        <name>Zn(2+)</name>
        <dbReference type="ChEBI" id="CHEBI:29105"/>
        <label>2</label>
        <note>catalytic</note>
    </ligand>
</feature>
<feature type="binding site" evidence="2">
    <location>
        <position position="246"/>
    </location>
    <ligand>
        <name>Zn(2+)</name>
        <dbReference type="ChEBI" id="CHEBI:29105"/>
        <label>1</label>
        <note>catalytic</note>
    </ligand>
</feature>
<feature type="binding site" evidence="2">
    <location>
        <position position="319"/>
    </location>
    <ligand>
        <name>Zn(2+)</name>
        <dbReference type="ChEBI" id="CHEBI:29105"/>
        <label>2</label>
        <note>catalytic</note>
    </ligand>
</feature>
<feature type="site" description="Transition state stabilizer" evidence="2">
    <location>
        <position position="318"/>
    </location>
</feature>
<feature type="glycosylation site" description="N-linked (GlcNAc...) asparagine" evidence="4">
    <location>
        <position position="59"/>
    </location>
</feature>
<feature type="glycosylation site" description="N-linked (GlcNAc...) asparagine" evidence="4">
    <location>
        <position position="115"/>
    </location>
</feature>
<feature type="glycosylation site" description="N-linked (GlcNAc...) asparagine" evidence="4">
    <location>
        <position position="118"/>
    </location>
</feature>
<feature type="glycosylation site" description="N-linked (GlcNAc...) asparagine" evidence="4">
    <location>
        <position position="237"/>
    </location>
</feature>
<feature type="glycosylation site" description="N-linked (GlcNAc...) asparagine" evidence="4">
    <location>
        <position position="805"/>
    </location>
</feature>
<feature type="glycosylation site" description="N-linked (GlcNAc...) asparagine" evidence="4">
    <location>
        <position position="846"/>
    </location>
</feature>
<feature type="glycosylation site" description="N-linked (GlcNAc...) asparagine" evidence="4">
    <location>
        <position position="954"/>
    </location>
</feature>